<name>EI2BA_YEAST</name>
<keyword id="KW-0002">3D-structure</keyword>
<keyword id="KW-0007">Acetylation</keyword>
<keyword id="KW-0010">Activator</keyword>
<keyword id="KW-0963">Cytoplasm</keyword>
<keyword id="KW-0396">Initiation factor</keyword>
<keyword id="KW-0597">Phosphoprotein</keyword>
<keyword id="KW-0648">Protein biosynthesis</keyword>
<keyword id="KW-1185">Reference proteome</keyword>
<keyword id="KW-0678">Repressor</keyword>
<keyword id="KW-0810">Translation regulation</keyword>
<gene>
    <name evidence="9" type="primary">GCN3</name>
    <name evidence="9" type="synonym">AAS2</name>
    <name type="synonym">TIF221</name>
    <name type="ordered locus">YKR026C</name>
</gene>
<proteinExistence type="evidence at protein level"/>
<accession>P14741</accession>
<accession>D6VX91</accession>
<organism>
    <name type="scientific">Saccharomyces cerevisiae (strain ATCC 204508 / S288c)</name>
    <name type="common">Baker's yeast</name>
    <dbReference type="NCBI Taxonomy" id="559292"/>
    <lineage>
        <taxon>Eukaryota</taxon>
        <taxon>Fungi</taxon>
        <taxon>Dikarya</taxon>
        <taxon>Ascomycota</taxon>
        <taxon>Saccharomycotina</taxon>
        <taxon>Saccharomycetes</taxon>
        <taxon>Saccharomycetales</taxon>
        <taxon>Saccharomycetaceae</taxon>
        <taxon>Saccharomyces</taxon>
    </lineage>
</organism>
<sequence length="305" mass="34025">MSEFNITETYLRFLEEDTEMTMPIAAIEALVTLLRIKTPETAAEMINTIKSSTEELIKSIPNSVSLRAGCDIFMRFVLRNLHLYGDWENCKQHLIENGQLFVSRAKKSRNKIAEIGVDFIADDDIILVHGYSRAVFSLLNHAANKFIRFRCVVTESRPSKQGNQLYTLLEQKGIPVTLIVDSAVGAVIDKVDKVFVGAEGVAESGGIINLVGTYSVGVLAHNARKPFYVVTESHKFVRMFPLSSDDLPMAGPPLDFTRRTDDLEDALRGPTIDYTAQEYITALITDLGVLTPSAVSEELIKMWYD</sequence>
<feature type="initiator methionine" description="Removed" evidence="11">
    <location>
        <position position="1"/>
    </location>
</feature>
<feature type="chain" id="PRO_0000156060" description="Translation initiation factor eIF2B subunit alpha">
    <location>
        <begin position="2"/>
        <end position="305"/>
    </location>
</feature>
<feature type="modified residue" description="N-acetylserine" evidence="11">
    <location>
        <position position="2"/>
    </location>
</feature>
<feature type="modified residue" description="Phosphothreonine" evidence="10">
    <location>
        <position position="291"/>
    </location>
</feature>
<evidence type="ECO:0000250" key="1">
    <source>
        <dbReference type="UniProtKB" id="Q9USP0"/>
    </source>
</evidence>
<evidence type="ECO:0000269" key="2">
    <source>
    </source>
</evidence>
<evidence type="ECO:0000269" key="3">
    <source>
    </source>
</evidence>
<evidence type="ECO:0000269" key="4">
    <source>
    </source>
</evidence>
<evidence type="ECO:0000269" key="5">
    <source>
    </source>
</evidence>
<evidence type="ECO:0000303" key="6">
    <source>
    </source>
</evidence>
<evidence type="ECO:0000303" key="7">
    <source>
    </source>
</evidence>
<evidence type="ECO:0000305" key="8"/>
<evidence type="ECO:0000312" key="9">
    <source>
        <dbReference type="SGD" id="S000001734"/>
    </source>
</evidence>
<evidence type="ECO:0007744" key="10">
    <source>
    </source>
</evidence>
<evidence type="ECO:0007744" key="11">
    <source>
    </source>
</evidence>
<dbReference type="EMBL" id="M23356">
    <property type="protein sequence ID" value="AAA34637.1"/>
    <property type="molecule type" value="Genomic_DNA"/>
</dbReference>
<dbReference type="EMBL" id="Z28251">
    <property type="protein sequence ID" value="CAA82098.1"/>
    <property type="molecule type" value="Genomic_DNA"/>
</dbReference>
<dbReference type="EMBL" id="BK006944">
    <property type="protein sequence ID" value="DAA09181.1"/>
    <property type="molecule type" value="Genomic_DNA"/>
</dbReference>
<dbReference type="PIR" id="A31562">
    <property type="entry name" value="A31562"/>
</dbReference>
<dbReference type="RefSeq" id="NP_012951.1">
    <property type="nucleotide sequence ID" value="NM_001179816.1"/>
</dbReference>
<dbReference type="PDB" id="6I3M">
    <property type="method" value="EM"/>
    <property type="resolution" value="3.93 A"/>
    <property type="chains" value="A/B=1-305"/>
</dbReference>
<dbReference type="PDB" id="6I7T">
    <property type="method" value="EM"/>
    <property type="resolution" value="4.61 A"/>
    <property type="chains" value="A/B=1-305"/>
</dbReference>
<dbReference type="PDB" id="6QG0">
    <property type="method" value="EM"/>
    <property type="resolution" value="4.20 A"/>
    <property type="chains" value="A/B=1-305"/>
</dbReference>
<dbReference type="PDB" id="6QG1">
    <property type="method" value="EM"/>
    <property type="resolution" value="4.20 A"/>
    <property type="chains" value="A/B=1-305"/>
</dbReference>
<dbReference type="PDB" id="6QG2">
    <property type="method" value="EM"/>
    <property type="resolution" value="4.60 A"/>
    <property type="chains" value="A/B=1-305"/>
</dbReference>
<dbReference type="PDB" id="6QG3">
    <property type="method" value="EM"/>
    <property type="resolution" value="9.40 A"/>
    <property type="chains" value="A/B=1-305"/>
</dbReference>
<dbReference type="PDB" id="6QG5">
    <property type="method" value="EM"/>
    <property type="resolution" value="10.10 A"/>
    <property type="chains" value="A/B=1-305"/>
</dbReference>
<dbReference type="PDB" id="6QG6">
    <property type="method" value="EM"/>
    <property type="resolution" value="4.65 A"/>
    <property type="chains" value="A/B=1-305"/>
</dbReference>
<dbReference type="PDBsum" id="6I3M"/>
<dbReference type="PDBsum" id="6I7T"/>
<dbReference type="PDBsum" id="6QG0"/>
<dbReference type="PDBsum" id="6QG1"/>
<dbReference type="PDBsum" id="6QG2"/>
<dbReference type="PDBsum" id="6QG3"/>
<dbReference type="PDBsum" id="6QG5"/>
<dbReference type="PDBsum" id="6QG6"/>
<dbReference type="EMDB" id="EMD-4404"/>
<dbReference type="EMDB" id="EMD-4428"/>
<dbReference type="EMDB" id="EMD-4543"/>
<dbReference type="EMDB" id="EMD-4544"/>
<dbReference type="EMDB" id="EMD-4545"/>
<dbReference type="EMDB" id="EMD-4546"/>
<dbReference type="EMDB" id="EMD-4547"/>
<dbReference type="EMDB" id="EMD-4548"/>
<dbReference type="SMR" id="P14741"/>
<dbReference type="BioGRID" id="34158">
    <property type="interactions" value="192"/>
</dbReference>
<dbReference type="ComplexPortal" id="CPX-429">
    <property type="entry name" value="Eukaryotic translation initiation factor 2B complex"/>
</dbReference>
<dbReference type="DIP" id="DIP-1328N"/>
<dbReference type="FunCoup" id="P14741">
    <property type="interactions" value="1381"/>
</dbReference>
<dbReference type="IntAct" id="P14741">
    <property type="interactions" value="82"/>
</dbReference>
<dbReference type="MINT" id="P14741"/>
<dbReference type="STRING" id="4932.YKR026C"/>
<dbReference type="iPTMnet" id="P14741"/>
<dbReference type="PaxDb" id="4932-YKR026C"/>
<dbReference type="PeptideAtlas" id="P14741"/>
<dbReference type="EnsemblFungi" id="YKR026C_mRNA">
    <property type="protein sequence ID" value="YKR026C"/>
    <property type="gene ID" value="YKR026C"/>
</dbReference>
<dbReference type="GeneID" id="853896"/>
<dbReference type="KEGG" id="sce:YKR026C"/>
<dbReference type="AGR" id="SGD:S000001734"/>
<dbReference type="SGD" id="S000001734">
    <property type="gene designation" value="GCN3"/>
</dbReference>
<dbReference type="VEuPathDB" id="FungiDB:YKR026C"/>
<dbReference type="eggNOG" id="KOG1466">
    <property type="taxonomic scope" value="Eukaryota"/>
</dbReference>
<dbReference type="GeneTree" id="ENSGT00550000074853"/>
<dbReference type="HOGENOM" id="CLU_016218_0_2_1"/>
<dbReference type="InParanoid" id="P14741"/>
<dbReference type="OMA" id="GDWESCK"/>
<dbReference type="OrthoDB" id="10249309at2759"/>
<dbReference type="BioCyc" id="YEAST:G3O-32002-MONOMER"/>
<dbReference type="Reactome" id="R-SCE-72731">
    <property type="pathway name" value="Recycling of eIF2:GDP"/>
</dbReference>
<dbReference type="BioGRID-ORCS" id="853896">
    <property type="hits" value="0 hits in 10 CRISPR screens"/>
</dbReference>
<dbReference type="PRO" id="PR:P14741"/>
<dbReference type="Proteomes" id="UP000002311">
    <property type="component" value="Chromosome XI"/>
</dbReference>
<dbReference type="RNAct" id="P14741">
    <property type="molecule type" value="protein"/>
</dbReference>
<dbReference type="GO" id="GO:0005829">
    <property type="term" value="C:cytosol"/>
    <property type="evidence" value="ECO:0007005"/>
    <property type="project" value="SGD"/>
</dbReference>
<dbReference type="GO" id="GO:0005851">
    <property type="term" value="C:eukaryotic translation initiation factor 2B complex"/>
    <property type="evidence" value="ECO:0000314"/>
    <property type="project" value="SGD"/>
</dbReference>
<dbReference type="GO" id="GO:0032045">
    <property type="term" value="C:guanyl-nucleotide exchange factor complex"/>
    <property type="evidence" value="ECO:0000314"/>
    <property type="project" value="ComplexPortal"/>
</dbReference>
<dbReference type="GO" id="GO:0030234">
    <property type="term" value="F:enzyme regulator activity"/>
    <property type="evidence" value="ECO:0000315"/>
    <property type="project" value="SGD"/>
</dbReference>
<dbReference type="GO" id="GO:0003743">
    <property type="term" value="F:translation initiation factor activity"/>
    <property type="evidence" value="ECO:0000314"/>
    <property type="project" value="SGD"/>
</dbReference>
<dbReference type="GO" id="GO:0002183">
    <property type="term" value="P:cytoplasmic translational initiation"/>
    <property type="evidence" value="ECO:0000250"/>
    <property type="project" value="UniProtKB"/>
</dbReference>
<dbReference type="GO" id="GO:1903833">
    <property type="term" value="P:positive regulation of cellular response to amino acid starvation"/>
    <property type="evidence" value="ECO:0000315"/>
    <property type="project" value="SGD"/>
</dbReference>
<dbReference type="GO" id="GO:1900036">
    <property type="term" value="P:positive regulation of cellular response to heat"/>
    <property type="evidence" value="ECO:0000315"/>
    <property type="project" value="SGD"/>
</dbReference>
<dbReference type="GO" id="GO:0045948">
    <property type="term" value="P:positive regulation of translational initiation"/>
    <property type="evidence" value="ECO:0000315"/>
    <property type="project" value="SGD"/>
</dbReference>
<dbReference type="GO" id="GO:0006446">
    <property type="term" value="P:regulation of translational initiation"/>
    <property type="evidence" value="ECO:0000314"/>
    <property type="project" value="SGD"/>
</dbReference>
<dbReference type="GO" id="GO:0006413">
    <property type="term" value="P:translational initiation"/>
    <property type="evidence" value="ECO:0000318"/>
    <property type="project" value="GO_Central"/>
</dbReference>
<dbReference type="FunFam" id="3.40.50.10470:FF:000017">
    <property type="entry name" value="eIF2B 34 kDa alpha subunit"/>
    <property type="match status" value="1"/>
</dbReference>
<dbReference type="FunFam" id="1.20.120.1070:FF:000002">
    <property type="entry name" value="Translation initiation factor eIF-2B subunit alpha"/>
    <property type="match status" value="1"/>
</dbReference>
<dbReference type="Gene3D" id="3.40.50.10470">
    <property type="entry name" value="Translation initiation factor eif-2b, domain 2"/>
    <property type="match status" value="1"/>
</dbReference>
<dbReference type="Gene3D" id="1.20.120.1070">
    <property type="entry name" value="Translation initiation factor eIF-2B, N-terminal domain"/>
    <property type="match status" value="1"/>
</dbReference>
<dbReference type="InterPro" id="IPR051501">
    <property type="entry name" value="eIF2B_alpha/beta/delta"/>
</dbReference>
<dbReference type="InterPro" id="IPR042528">
    <property type="entry name" value="elF-2B_alpha_N"/>
</dbReference>
<dbReference type="InterPro" id="IPR000649">
    <property type="entry name" value="IF-2B-related"/>
</dbReference>
<dbReference type="InterPro" id="IPR042529">
    <property type="entry name" value="IF_2B-like_C"/>
</dbReference>
<dbReference type="InterPro" id="IPR037171">
    <property type="entry name" value="NagB/RpiA_transferase-like"/>
</dbReference>
<dbReference type="PANTHER" id="PTHR45860">
    <property type="entry name" value="TRANSLATION INITIATION FACTOR EIF-2B SUBUNIT ALPHA"/>
    <property type="match status" value="1"/>
</dbReference>
<dbReference type="PANTHER" id="PTHR45860:SF1">
    <property type="entry name" value="TRANSLATION INITIATION FACTOR EIF-2B SUBUNIT ALPHA"/>
    <property type="match status" value="1"/>
</dbReference>
<dbReference type="Pfam" id="PF01008">
    <property type="entry name" value="IF-2B"/>
    <property type="match status" value="1"/>
</dbReference>
<dbReference type="SUPFAM" id="SSF100950">
    <property type="entry name" value="NagB/RpiA/CoA transferase-like"/>
    <property type="match status" value="1"/>
</dbReference>
<reference key="1">
    <citation type="journal article" date="1988" name="Mol. Cell. Biol.">
        <title>Molecular analysis of GCN3, a translational activator of GCN4: evidence for posttranslational control of GCN3 regulatory function.</title>
        <authorList>
            <person name="Hannig E.M."/>
            <person name="Hinnebusch A.G."/>
        </authorList>
    </citation>
    <scope>NUCLEOTIDE SEQUENCE [GENOMIC DNA]</scope>
</reference>
<reference key="2">
    <citation type="journal article" date="1994" name="Nature">
        <title>Complete DNA sequence of yeast chromosome XI.</title>
        <authorList>
            <person name="Dujon B."/>
            <person name="Alexandraki D."/>
            <person name="Andre B."/>
            <person name="Ansorge W."/>
            <person name="Baladron V."/>
            <person name="Ballesta J.P.G."/>
            <person name="Banrevi A."/>
            <person name="Bolle P.-A."/>
            <person name="Bolotin-Fukuhara M."/>
            <person name="Bossier P."/>
            <person name="Bou G."/>
            <person name="Boyer J."/>
            <person name="Buitrago M.J."/>
            <person name="Cheret G."/>
            <person name="Colleaux L."/>
            <person name="Daignan-Fornier B."/>
            <person name="del Rey F."/>
            <person name="Dion C."/>
            <person name="Domdey H."/>
            <person name="Duesterhoeft A."/>
            <person name="Duesterhus S."/>
            <person name="Entian K.-D."/>
            <person name="Erfle H."/>
            <person name="Esteban P.F."/>
            <person name="Feldmann H."/>
            <person name="Fernandes L."/>
            <person name="Fobo G.M."/>
            <person name="Fritz C."/>
            <person name="Fukuhara H."/>
            <person name="Gabel C."/>
            <person name="Gaillon L."/>
            <person name="Garcia-Cantalejo J.M."/>
            <person name="Garcia-Ramirez J.J."/>
            <person name="Gent M.E."/>
            <person name="Ghazvini M."/>
            <person name="Goffeau A."/>
            <person name="Gonzalez A."/>
            <person name="Grothues D."/>
            <person name="Guerreiro P."/>
            <person name="Hegemann J.H."/>
            <person name="Hewitt N."/>
            <person name="Hilger F."/>
            <person name="Hollenberg C.P."/>
            <person name="Horaitis O."/>
            <person name="Indge K.J."/>
            <person name="Jacquier A."/>
            <person name="James C.M."/>
            <person name="Jauniaux J.-C."/>
            <person name="Jimenez A."/>
            <person name="Keuchel H."/>
            <person name="Kirchrath L."/>
            <person name="Kleine K."/>
            <person name="Koetter P."/>
            <person name="Legrain P."/>
            <person name="Liebl S."/>
            <person name="Louis E.J."/>
            <person name="Maia e Silva A."/>
            <person name="Marck C."/>
            <person name="Monnier A.-L."/>
            <person name="Moestl D."/>
            <person name="Mueller S."/>
            <person name="Obermaier B."/>
            <person name="Oliver S.G."/>
            <person name="Pallier C."/>
            <person name="Pascolo S."/>
            <person name="Pfeiffer F."/>
            <person name="Philippsen P."/>
            <person name="Planta R.J."/>
            <person name="Pohl F.M."/>
            <person name="Pohl T.M."/>
            <person name="Poehlmann R."/>
            <person name="Portetelle D."/>
            <person name="Purnelle B."/>
            <person name="Puzos V."/>
            <person name="Ramezani Rad M."/>
            <person name="Rasmussen S.W."/>
            <person name="Remacha M.A."/>
            <person name="Revuelta J.L."/>
            <person name="Richard G.-F."/>
            <person name="Rieger M."/>
            <person name="Rodrigues-Pousada C."/>
            <person name="Rose M."/>
            <person name="Rupp T."/>
            <person name="Santos M.A."/>
            <person name="Schwager C."/>
            <person name="Sensen C."/>
            <person name="Skala J."/>
            <person name="Soares H."/>
            <person name="Sor F."/>
            <person name="Stegemann J."/>
            <person name="Tettelin H."/>
            <person name="Thierry A."/>
            <person name="Tzermia M."/>
            <person name="Urrestarazu L.A."/>
            <person name="van Dyck L."/>
            <person name="van Vliet-Reedijk J.C."/>
            <person name="Valens M."/>
            <person name="Vandenbol M."/>
            <person name="Vilela C."/>
            <person name="Vissers S."/>
            <person name="von Wettstein D."/>
            <person name="Voss H."/>
            <person name="Wiemann S."/>
            <person name="Xu G."/>
            <person name="Zimmermann J."/>
            <person name="Haasemann M."/>
            <person name="Becker I."/>
            <person name="Mewes H.-W."/>
        </authorList>
    </citation>
    <scope>NUCLEOTIDE SEQUENCE [LARGE SCALE GENOMIC DNA]</scope>
    <source>
        <strain>ATCC 204508 / S288c</strain>
    </source>
</reference>
<reference key="3">
    <citation type="journal article" date="2014" name="G3 (Bethesda)">
        <title>The reference genome sequence of Saccharomyces cerevisiae: Then and now.</title>
        <authorList>
            <person name="Engel S.R."/>
            <person name="Dietrich F.S."/>
            <person name="Fisk D.G."/>
            <person name="Binkley G."/>
            <person name="Balakrishnan R."/>
            <person name="Costanzo M.C."/>
            <person name="Dwight S.S."/>
            <person name="Hitz B.C."/>
            <person name="Karra K."/>
            <person name="Nash R.S."/>
            <person name="Weng S."/>
            <person name="Wong E.D."/>
            <person name="Lloyd P."/>
            <person name="Skrzypek M.S."/>
            <person name="Miyasato S.R."/>
            <person name="Simison M."/>
            <person name="Cherry J.M."/>
        </authorList>
    </citation>
    <scope>GENOME REANNOTATION</scope>
    <source>
        <strain>ATCC 204508 / S288c</strain>
    </source>
</reference>
<reference key="4">
    <citation type="journal article" date="1993" name="Proc. Natl. Acad. Sci. U.S.A.">
        <title>A protein complex of translational regulators of GCN4 mRNA is the guanine nucleotide-exchange factor for translation initiation factor 2 in yeast.</title>
        <authorList>
            <person name="Cigan A.M."/>
            <person name="Bushman J.L."/>
            <person name="Boal T.R."/>
            <person name="Hinnebusch A.G."/>
        </authorList>
    </citation>
    <scope>IDENTIFICATION IN THE EIF2-B COMPLEX</scope>
    <scope>FUNCTION OF THE EIF2-B COMPLEX</scope>
</reference>
<reference key="5">
    <citation type="journal article" date="1998" name="Genes Dev.">
        <title>eIF2 independently binds two distinct eIF2B subcomplexes that catalyze and regulate guanine-nucleotide exchange.</title>
        <authorList>
            <person name="Pavitt G.D."/>
            <person name="Ramaiah K.V."/>
            <person name="Kimball S.R."/>
            <person name="Hinnebusch A.G."/>
        </authorList>
    </citation>
    <scope>FUNCTION</scope>
    <scope>IDENTIFICATION IN A EIF2-B SUBCOMPLEX</scope>
</reference>
<reference key="6">
    <citation type="journal article" date="2000" name="Mol. Cell. Biol.">
        <title>Glucose limitation induces GCN4 translation by activation of Gcn2 protein kinase.</title>
        <authorList>
            <person name="Yang R."/>
            <person name="Wek S.A."/>
            <person name="Wek R.C."/>
        </authorList>
    </citation>
    <scope>FUNCTION</scope>
    <scope>DISRUPTION PHENOTYPE</scope>
</reference>
<reference key="7">
    <citation type="journal article" date="2003" name="Nature">
        <title>Global analysis of protein expression in yeast.</title>
        <authorList>
            <person name="Ghaemmaghami S."/>
            <person name="Huh W.-K."/>
            <person name="Bower K."/>
            <person name="Howson R.W."/>
            <person name="Belle A."/>
            <person name="Dephoure N."/>
            <person name="O'Shea E.K."/>
            <person name="Weissman J.S."/>
        </authorList>
    </citation>
    <scope>LEVEL OF PROTEIN EXPRESSION [LARGE SCALE ANALYSIS]</scope>
</reference>
<reference key="8">
    <citation type="journal article" date="2008" name="Mol. Cell. Proteomics">
        <title>A multidimensional chromatography technology for in-depth phosphoproteome analysis.</title>
        <authorList>
            <person name="Albuquerque C.P."/>
            <person name="Smolka M.B."/>
            <person name="Payne S.H."/>
            <person name="Bafna V."/>
            <person name="Eng J."/>
            <person name="Zhou H."/>
        </authorList>
    </citation>
    <scope>PHOSPHORYLATION [LARGE SCALE ANALYSIS] AT THR-291</scope>
    <scope>IDENTIFICATION BY MASS SPECTROMETRY [LARGE SCALE ANALYSIS]</scope>
</reference>
<reference key="9">
    <citation type="journal article" date="2012" name="Proc. Natl. Acad. Sci. U.S.A.">
        <title>N-terminal acetylome analyses and functional insights of the N-terminal acetyltransferase NatB.</title>
        <authorList>
            <person name="Van Damme P."/>
            <person name="Lasa M."/>
            <person name="Polevoda B."/>
            <person name="Gazquez C."/>
            <person name="Elosegui-Artola A."/>
            <person name="Kim D.S."/>
            <person name="De Juan-Pardo E."/>
            <person name="Demeyer K."/>
            <person name="Hole K."/>
            <person name="Larrea E."/>
            <person name="Timmerman E."/>
            <person name="Prieto J."/>
            <person name="Arnesen T."/>
            <person name="Sherman F."/>
            <person name="Gevaert K."/>
            <person name="Aldabe R."/>
        </authorList>
    </citation>
    <scope>ACETYLATION [LARGE SCALE ANALYSIS] AT SER-2</scope>
    <scope>CLEAVAGE OF INITIATOR METHIONINE [LARGE SCALE ANALYSIS]</scope>
    <scope>IDENTIFICATION BY MASS SPECTROMETRY [LARGE SCALE ANALYSIS]</scope>
</reference>
<comment type="function">
    <text evidence="1 2 4 5">Acts as a component of the translation initiation factor 2B (eIF2B) complex, which catalyzes the exchange of GDP for GTP on the eukaryotic initiation factor 2 (eIF2) complex gamma subunit (PubMed:8506384, PubMed:9472020). Its guanine nucleotide exchange factor activity is repressed when bound to eIF2 complex phosphorylated on the alpha subunit, thereby limiting the amount of methionyl-initiator methionine tRNA available to the ribosome and consequently global translation is repressed (By similarity). It activates the translation of GCN4 in response to low amino acid, carbon, or purine availability, by suppressing the inhibitory effects of multiple uORFs present in the leader of GCN4 mRNA (PubMed:10733573). It may promote either repression or activation of GCN4 expression depending on amino acid availability (PubMed:8506384). Modulation of GCN3 regulatory function in response to amino acid availability occurs post-translationally (PubMed:8506384, PubMed:9472020).</text>
</comment>
<comment type="subunit">
    <text evidence="1 4 5">Component of the translation initiation factor 2B (eIF2B) complex which is a heterodecamer of two sets of five different subunits: alpha, beta, gamma, delta and epsilon. Subunits alpha, beta and delta comprise a regulatory subcomplex and subunits epsilon and gamma comprise a catalytic subcomplex (PubMed:8506384, PubMed:9472020). Within the complex, the hexameric regulatory complex resides at the center, with the two heterodimeric catalytic subcomplexes bound on opposite sides (By similarity).</text>
</comment>
<comment type="interaction">
    <interactant intactId="EBI-6253">
        <id>P14741</id>
    </interactant>
    <interactant intactId="EBI-6265">
        <id>P12754</id>
        <label>GCD2</label>
    </interactant>
    <organismsDiffer>false</organismsDiffer>
    <experiments>8</experiments>
</comment>
<comment type="interaction">
    <interactant intactId="EBI-6253">
        <id>P14741</id>
    </interactant>
    <interactant intactId="EBI-6260">
        <id>P32502</id>
        <label>GCD7</label>
    </interactant>
    <organismsDiffer>false</organismsDiffer>
    <experiments>11</experiments>
</comment>
<comment type="interaction">
    <interactant intactId="EBI-6253">
        <id>P14741</id>
    </interactant>
    <interactant intactId="EBI-8920">
        <id>P09064</id>
        <label>SUI3</label>
    </interactant>
    <organismsDiffer>false</organismsDiffer>
    <experiments>2</experiments>
</comment>
<comment type="subcellular location">
    <subcellularLocation>
        <location evidence="1">Cytoplasm</location>
        <location evidence="1">Cytosol</location>
    </subcellularLocation>
</comment>
<comment type="disruption phenotype">
    <text evidence="2">Inhibits GCN4 derepression in glucose, amino acid, or purine-starved cells.</text>
</comment>
<comment type="miscellaneous">
    <text evidence="3">Present with 8970 molecules/cell in log phase SD medium.</text>
</comment>
<comment type="similarity">
    <text evidence="8">Belongs to the eIF-2B alpha/beta/delta subunits family.</text>
</comment>
<protein>
    <recommendedName>
        <fullName>Translation initiation factor eIF2B subunit alpha</fullName>
    </recommendedName>
    <alternativeName>
        <fullName>GCD complex subunit GCN3</fullName>
    </alternativeName>
    <alternativeName>
        <fullName evidence="7">Guanine nucleotide exchange factor subunit GCN3</fullName>
    </alternativeName>
    <alternativeName>
        <fullName evidence="6">Translational activator GCN3</fullName>
    </alternativeName>
    <alternativeName>
        <fullName>eIF2B GDP-GTP exchange factor subunit alpha</fullName>
    </alternativeName>
</protein>